<reference key="1">
    <citation type="journal article" date="2003" name="Proc. Natl. Acad. Sci. U.S.A.">
        <title>The complete genome sequence of the Arabidopsis and tomato pathogen Pseudomonas syringae pv. tomato DC3000.</title>
        <authorList>
            <person name="Buell C.R."/>
            <person name="Joardar V."/>
            <person name="Lindeberg M."/>
            <person name="Selengut J."/>
            <person name="Paulsen I.T."/>
            <person name="Gwinn M.L."/>
            <person name="Dodson R.J."/>
            <person name="DeBoy R.T."/>
            <person name="Durkin A.S."/>
            <person name="Kolonay J.F."/>
            <person name="Madupu R."/>
            <person name="Daugherty S.C."/>
            <person name="Brinkac L.M."/>
            <person name="Beanan M.J."/>
            <person name="Haft D.H."/>
            <person name="Nelson W.C."/>
            <person name="Davidsen T.M."/>
            <person name="Zafar N."/>
            <person name="Zhou L."/>
            <person name="Liu J."/>
            <person name="Yuan Q."/>
            <person name="Khouri H.M."/>
            <person name="Fedorova N.B."/>
            <person name="Tran B."/>
            <person name="Russell D."/>
            <person name="Berry K.J."/>
            <person name="Utterback T.R."/>
            <person name="Van Aken S.E."/>
            <person name="Feldblyum T.V."/>
            <person name="D'Ascenzo M."/>
            <person name="Deng W.-L."/>
            <person name="Ramos A.R."/>
            <person name="Alfano J.R."/>
            <person name="Cartinhour S."/>
            <person name="Chatterjee A.K."/>
            <person name="Delaney T.P."/>
            <person name="Lazarowitz S.G."/>
            <person name="Martin G.B."/>
            <person name="Schneider D.J."/>
            <person name="Tang X."/>
            <person name="Bender C.L."/>
            <person name="White O."/>
            <person name="Fraser C.M."/>
            <person name="Collmer A."/>
        </authorList>
    </citation>
    <scope>NUCLEOTIDE SEQUENCE [LARGE SCALE GENOMIC DNA]</scope>
    <source>
        <strain>ATCC BAA-871 / DC3000</strain>
    </source>
</reference>
<proteinExistence type="inferred from homology"/>
<feature type="chain" id="PRO_0000176663" description="Large ribosomal subunit protein bL9">
    <location>
        <begin position="1"/>
        <end position="148"/>
    </location>
</feature>
<dbReference type="EMBL" id="AE016853">
    <property type="protein sequence ID" value="AAO58358.1"/>
    <property type="molecule type" value="Genomic_DNA"/>
</dbReference>
<dbReference type="RefSeq" id="NP_794663.1">
    <property type="nucleotide sequence ID" value="NC_004578.1"/>
</dbReference>
<dbReference type="RefSeq" id="WP_003317208.1">
    <property type="nucleotide sequence ID" value="NC_004578.1"/>
</dbReference>
<dbReference type="SMR" id="Q87VK6"/>
<dbReference type="STRING" id="223283.PSPTO_4930"/>
<dbReference type="GeneID" id="96216921"/>
<dbReference type="KEGG" id="pst:PSPTO_4930"/>
<dbReference type="PATRIC" id="fig|223283.9.peg.5044"/>
<dbReference type="eggNOG" id="COG0359">
    <property type="taxonomic scope" value="Bacteria"/>
</dbReference>
<dbReference type="HOGENOM" id="CLU_078938_4_1_6"/>
<dbReference type="OrthoDB" id="9788336at2"/>
<dbReference type="PhylomeDB" id="Q87VK6"/>
<dbReference type="Proteomes" id="UP000002515">
    <property type="component" value="Chromosome"/>
</dbReference>
<dbReference type="GO" id="GO:1990904">
    <property type="term" value="C:ribonucleoprotein complex"/>
    <property type="evidence" value="ECO:0007669"/>
    <property type="project" value="UniProtKB-KW"/>
</dbReference>
<dbReference type="GO" id="GO:0005840">
    <property type="term" value="C:ribosome"/>
    <property type="evidence" value="ECO:0007669"/>
    <property type="project" value="UniProtKB-KW"/>
</dbReference>
<dbReference type="GO" id="GO:0019843">
    <property type="term" value="F:rRNA binding"/>
    <property type="evidence" value="ECO:0007669"/>
    <property type="project" value="UniProtKB-UniRule"/>
</dbReference>
<dbReference type="GO" id="GO:0003735">
    <property type="term" value="F:structural constituent of ribosome"/>
    <property type="evidence" value="ECO:0007669"/>
    <property type="project" value="InterPro"/>
</dbReference>
<dbReference type="GO" id="GO:0006412">
    <property type="term" value="P:translation"/>
    <property type="evidence" value="ECO:0007669"/>
    <property type="project" value="UniProtKB-UniRule"/>
</dbReference>
<dbReference type="Gene3D" id="3.10.430.100">
    <property type="entry name" value="Ribosomal protein L9, C-terminal domain"/>
    <property type="match status" value="1"/>
</dbReference>
<dbReference type="Gene3D" id="3.40.5.10">
    <property type="entry name" value="Ribosomal protein L9, N-terminal domain"/>
    <property type="match status" value="1"/>
</dbReference>
<dbReference type="HAMAP" id="MF_00503">
    <property type="entry name" value="Ribosomal_bL9"/>
    <property type="match status" value="1"/>
</dbReference>
<dbReference type="InterPro" id="IPR000244">
    <property type="entry name" value="Ribosomal_bL9"/>
</dbReference>
<dbReference type="InterPro" id="IPR009027">
    <property type="entry name" value="Ribosomal_bL9/RNase_H1_N"/>
</dbReference>
<dbReference type="InterPro" id="IPR020594">
    <property type="entry name" value="Ribosomal_bL9_bac/chp"/>
</dbReference>
<dbReference type="InterPro" id="IPR020069">
    <property type="entry name" value="Ribosomal_bL9_C"/>
</dbReference>
<dbReference type="InterPro" id="IPR036791">
    <property type="entry name" value="Ribosomal_bL9_C_sf"/>
</dbReference>
<dbReference type="InterPro" id="IPR020070">
    <property type="entry name" value="Ribosomal_bL9_N"/>
</dbReference>
<dbReference type="InterPro" id="IPR036935">
    <property type="entry name" value="Ribosomal_bL9_N_sf"/>
</dbReference>
<dbReference type="NCBIfam" id="TIGR00158">
    <property type="entry name" value="L9"/>
    <property type="match status" value="1"/>
</dbReference>
<dbReference type="PANTHER" id="PTHR21368">
    <property type="entry name" value="50S RIBOSOMAL PROTEIN L9"/>
    <property type="match status" value="1"/>
</dbReference>
<dbReference type="Pfam" id="PF03948">
    <property type="entry name" value="Ribosomal_L9_C"/>
    <property type="match status" value="1"/>
</dbReference>
<dbReference type="Pfam" id="PF01281">
    <property type="entry name" value="Ribosomal_L9_N"/>
    <property type="match status" value="1"/>
</dbReference>
<dbReference type="SUPFAM" id="SSF55658">
    <property type="entry name" value="L9 N-domain-like"/>
    <property type="match status" value="1"/>
</dbReference>
<dbReference type="SUPFAM" id="SSF55653">
    <property type="entry name" value="Ribosomal protein L9 C-domain"/>
    <property type="match status" value="1"/>
</dbReference>
<dbReference type="PROSITE" id="PS00651">
    <property type="entry name" value="RIBOSOMAL_L9"/>
    <property type="match status" value="1"/>
</dbReference>
<accession>Q87VK6</accession>
<organism>
    <name type="scientific">Pseudomonas syringae pv. tomato (strain ATCC BAA-871 / DC3000)</name>
    <dbReference type="NCBI Taxonomy" id="223283"/>
    <lineage>
        <taxon>Bacteria</taxon>
        <taxon>Pseudomonadati</taxon>
        <taxon>Pseudomonadota</taxon>
        <taxon>Gammaproteobacteria</taxon>
        <taxon>Pseudomonadales</taxon>
        <taxon>Pseudomonadaceae</taxon>
        <taxon>Pseudomonas</taxon>
    </lineage>
</organism>
<protein>
    <recommendedName>
        <fullName evidence="1">Large ribosomal subunit protein bL9</fullName>
    </recommendedName>
    <alternativeName>
        <fullName evidence="2">50S ribosomal protein L9</fullName>
    </alternativeName>
</protein>
<keyword id="KW-1185">Reference proteome</keyword>
<keyword id="KW-0687">Ribonucleoprotein</keyword>
<keyword id="KW-0689">Ribosomal protein</keyword>
<keyword id="KW-0694">RNA-binding</keyword>
<keyword id="KW-0699">rRNA-binding</keyword>
<gene>
    <name evidence="1" type="primary">rplI</name>
    <name type="ordered locus">PSPTO_4930</name>
</gene>
<evidence type="ECO:0000255" key="1">
    <source>
        <dbReference type="HAMAP-Rule" id="MF_00503"/>
    </source>
</evidence>
<evidence type="ECO:0000305" key="2"/>
<name>RL9_PSESM</name>
<sequence length="148" mass="15471">MQLILLEKVANLGNLGDKVNVKAGYGRNYLLPYGKATAATAANVAAFEERRAELEKLAADKKASAETRAAQLAELEVTITATAGDEGKLFGSIGTHDIADALTASGVEVAKSEVRLPNGTIRNVGEFDVAVHLHSDVEATVRVVVVAA</sequence>
<comment type="function">
    <text evidence="1">Binds to the 23S rRNA.</text>
</comment>
<comment type="similarity">
    <text evidence="1">Belongs to the bacterial ribosomal protein bL9 family.</text>
</comment>